<name>CRYL1_RAT</name>
<keyword id="KW-0007">Acetylation</keyword>
<keyword id="KW-0963">Cytoplasm</keyword>
<keyword id="KW-0520">NAD</keyword>
<keyword id="KW-0560">Oxidoreductase</keyword>
<keyword id="KW-0597">Phosphoprotein</keyword>
<keyword id="KW-1185">Reference proteome</keyword>
<evidence type="ECO:0000250" key="1"/>
<evidence type="ECO:0000250" key="2">
    <source>
        <dbReference type="UniProtKB" id="P14755"/>
    </source>
</evidence>
<evidence type="ECO:0000250" key="3">
    <source>
        <dbReference type="UniProtKB" id="Q9Y2S2"/>
    </source>
</evidence>
<evidence type="ECO:0000305" key="4"/>
<evidence type="ECO:0007744" key="5">
    <source>
    </source>
</evidence>
<dbReference type="EC" id="1.1.1.45" evidence="3"/>
<dbReference type="EMBL" id="AY040223">
    <property type="protein sequence ID" value="AAK72608.1"/>
    <property type="molecule type" value="mRNA"/>
</dbReference>
<dbReference type="EMBL" id="BC078685">
    <property type="protein sequence ID" value="AAH78685.1"/>
    <property type="molecule type" value="mRNA"/>
</dbReference>
<dbReference type="RefSeq" id="NP_786933.1">
    <property type="nucleotide sequence ID" value="NM_175757.3"/>
</dbReference>
<dbReference type="SMR" id="Q811X6"/>
<dbReference type="FunCoup" id="Q811X6">
    <property type="interactions" value="182"/>
</dbReference>
<dbReference type="STRING" id="10116.ENSRNOP00000012093"/>
<dbReference type="iPTMnet" id="Q811X6"/>
<dbReference type="PhosphoSitePlus" id="Q811X6"/>
<dbReference type="PaxDb" id="10116-ENSRNOP00000012093"/>
<dbReference type="Ensembl" id="ENSRNOT00000012093.4">
    <property type="protein sequence ID" value="ENSRNOP00000012093.2"/>
    <property type="gene ID" value="ENSRNOG00000008989.6"/>
</dbReference>
<dbReference type="GeneID" id="290277"/>
<dbReference type="KEGG" id="rno:290277"/>
<dbReference type="UCSC" id="RGD:631427">
    <property type="organism name" value="rat"/>
</dbReference>
<dbReference type="AGR" id="RGD:631427"/>
<dbReference type="CTD" id="51084"/>
<dbReference type="RGD" id="631427">
    <property type="gene designation" value="Cryl1"/>
</dbReference>
<dbReference type="eggNOG" id="KOG2305">
    <property type="taxonomic scope" value="Eukaryota"/>
</dbReference>
<dbReference type="GeneTree" id="ENSGT00390000007182"/>
<dbReference type="HOGENOM" id="CLU_009834_0_0_1"/>
<dbReference type="InParanoid" id="Q811X6"/>
<dbReference type="OrthoDB" id="62579at9989"/>
<dbReference type="PhylomeDB" id="Q811X6"/>
<dbReference type="TreeFam" id="TF313501"/>
<dbReference type="Reactome" id="R-RNO-5661270">
    <property type="pathway name" value="Formation of xylulose-5-phosphate"/>
</dbReference>
<dbReference type="PRO" id="PR:Q811X6"/>
<dbReference type="Proteomes" id="UP000002494">
    <property type="component" value="Chromosome 15"/>
</dbReference>
<dbReference type="Bgee" id="ENSRNOG00000008989">
    <property type="expression patterns" value="Expressed in adult mammalian kidney and 19 other cell types or tissues"/>
</dbReference>
<dbReference type="GO" id="GO:0005829">
    <property type="term" value="C:cytosol"/>
    <property type="evidence" value="ECO:0000250"/>
    <property type="project" value="UniProtKB"/>
</dbReference>
<dbReference type="GO" id="GO:0050104">
    <property type="term" value="F:L-gulonate 3-dehydrogenase activity"/>
    <property type="evidence" value="ECO:0000250"/>
    <property type="project" value="UniProtKB"/>
</dbReference>
<dbReference type="GO" id="GO:0070403">
    <property type="term" value="F:NAD+ binding"/>
    <property type="evidence" value="ECO:0000250"/>
    <property type="project" value="UniProtKB"/>
</dbReference>
<dbReference type="GO" id="GO:0042803">
    <property type="term" value="F:protein homodimerization activity"/>
    <property type="evidence" value="ECO:0000266"/>
    <property type="project" value="RGD"/>
</dbReference>
<dbReference type="GO" id="GO:0019640">
    <property type="term" value="P:D-glucuronate catabolic process to D-xylulose 5-phosphate"/>
    <property type="evidence" value="ECO:0000266"/>
    <property type="project" value="RGD"/>
</dbReference>
<dbReference type="GO" id="GO:0006631">
    <property type="term" value="P:fatty acid metabolic process"/>
    <property type="evidence" value="ECO:0007669"/>
    <property type="project" value="InterPro"/>
</dbReference>
<dbReference type="FunFam" id="3.40.50.720:FF:000356">
    <property type="entry name" value="Lambda-crystallin homolog"/>
    <property type="match status" value="1"/>
</dbReference>
<dbReference type="FunFam" id="1.10.1040.10:FF:000023">
    <property type="entry name" value="lambda-crystallin homolog"/>
    <property type="match status" value="1"/>
</dbReference>
<dbReference type="Gene3D" id="1.10.1040.10">
    <property type="entry name" value="N-(1-d-carboxylethyl)-l-norvaline Dehydrogenase, domain 2"/>
    <property type="match status" value="1"/>
</dbReference>
<dbReference type="Gene3D" id="3.40.50.720">
    <property type="entry name" value="NAD(P)-binding Rossmann-like Domain"/>
    <property type="match status" value="1"/>
</dbReference>
<dbReference type="InterPro" id="IPR022694">
    <property type="entry name" value="3-OHacyl-CoA_DH"/>
</dbReference>
<dbReference type="InterPro" id="IPR006180">
    <property type="entry name" value="3-OHacyl-CoA_DH_CS"/>
</dbReference>
<dbReference type="InterPro" id="IPR006176">
    <property type="entry name" value="3-OHacyl-CoA_DH_NAD-bd"/>
</dbReference>
<dbReference type="InterPro" id="IPR006108">
    <property type="entry name" value="3HC_DH_C"/>
</dbReference>
<dbReference type="InterPro" id="IPR008927">
    <property type="entry name" value="6-PGluconate_DH-like_C_sf"/>
</dbReference>
<dbReference type="InterPro" id="IPR013328">
    <property type="entry name" value="6PGD_dom2"/>
</dbReference>
<dbReference type="InterPro" id="IPR036291">
    <property type="entry name" value="NAD(P)-bd_dom_sf"/>
</dbReference>
<dbReference type="PANTHER" id="PTHR48075">
    <property type="entry name" value="3-HYDROXYACYL-COA DEHYDROGENASE FAMILY PROTEIN"/>
    <property type="match status" value="1"/>
</dbReference>
<dbReference type="PANTHER" id="PTHR48075:SF1">
    <property type="entry name" value="LAMBDA-CRYSTALLIN HOMOLOG"/>
    <property type="match status" value="1"/>
</dbReference>
<dbReference type="Pfam" id="PF00725">
    <property type="entry name" value="3HCDH"/>
    <property type="match status" value="1"/>
</dbReference>
<dbReference type="Pfam" id="PF02737">
    <property type="entry name" value="3HCDH_N"/>
    <property type="match status" value="1"/>
</dbReference>
<dbReference type="PIRSF" id="PIRSF000105">
    <property type="entry name" value="HCDH"/>
    <property type="match status" value="1"/>
</dbReference>
<dbReference type="SUPFAM" id="SSF48179">
    <property type="entry name" value="6-phosphogluconate dehydrogenase C-terminal domain-like"/>
    <property type="match status" value="1"/>
</dbReference>
<dbReference type="SUPFAM" id="SSF51735">
    <property type="entry name" value="NAD(P)-binding Rossmann-fold domains"/>
    <property type="match status" value="1"/>
</dbReference>
<dbReference type="PROSITE" id="PS00067">
    <property type="entry name" value="3HCDH"/>
    <property type="match status" value="1"/>
</dbReference>
<gene>
    <name type="primary">Cryl1</name>
    <name type="synonym">Cry</name>
</gene>
<feature type="initiator methionine" description="Removed" evidence="2">
    <location>
        <position position="1"/>
    </location>
</feature>
<feature type="chain" id="PRO_0000232508" description="Lambda-crystallin homolog">
    <location>
        <begin position="2"/>
        <end position="319"/>
    </location>
</feature>
<feature type="binding site" evidence="1">
    <location>
        <begin position="16"/>
        <end position="17"/>
    </location>
    <ligand>
        <name>NAD(+)</name>
        <dbReference type="ChEBI" id="CHEBI:57540"/>
    </ligand>
</feature>
<feature type="binding site" evidence="1">
    <location>
        <position position="36"/>
    </location>
    <ligand>
        <name>NAD(+)</name>
        <dbReference type="ChEBI" id="CHEBI:57540"/>
    </ligand>
</feature>
<feature type="binding site" evidence="1">
    <location>
        <position position="97"/>
    </location>
    <ligand>
        <name>NAD(+)</name>
        <dbReference type="ChEBI" id="CHEBI:57540"/>
    </ligand>
</feature>
<feature type="binding site" evidence="1">
    <location>
        <position position="102"/>
    </location>
    <ligand>
        <name>NAD(+)</name>
        <dbReference type="ChEBI" id="CHEBI:57540"/>
    </ligand>
</feature>
<feature type="modified residue" description="N-acetylalanine" evidence="2">
    <location>
        <position position="2"/>
    </location>
</feature>
<feature type="modified residue" description="Phosphoserine" evidence="5">
    <location>
        <position position="3"/>
    </location>
</feature>
<organism>
    <name type="scientific">Rattus norvegicus</name>
    <name type="common">Rat</name>
    <dbReference type="NCBI Taxonomy" id="10116"/>
    <lineage>
        <taxon>Eukaryota</taxon>
        <taxon>Metazoa</taxon>
        <taxon>Chordata</taxon>
        <taxon>Craniata</taxon>
        <taxon>Vertebrata</taxon>
        <taxon>Euteleostomi</taxon>
        <taxon>Mammalia</taxon>
        <taxon>Eutheria</taxon>
        <taxon>Euarchontoglires</taxon>
        <taxon>Glires</taxon>
        <taxon>Rodentia</taxon>
        <taxon>Myomorpha</taxon>
        <taxon>Muroidea</taxon>
        <taxon>Muridae</taxon>
        <taxon>Murinae</taxon>
        <taxon>Rattus</taxon>
    </lineage>
</organism>
<sequence length="319" mass="35341">MASPAAGGVVIIGSGLIGRSWAMLFASGGFKVKLYDIEQQQITNALESIRKEMKSLEQSGSLKGSLGAEQQLSLISGCGNLAEAVEGAMHIQECVPENLELKKKIFAQLDRIVDDQVILSSSSSCLLPSKLFTGLAHVKQCIVAHPVNPPYYVPLVELVPHPETAPATMDRTYALMKKIRQTPVRVLKEIDGFVLNRLQYAIISEAWRLVEEGIVSPNDLDLVMSDGLGMRYAFIGPLETMHLNAEGMVSYCDRYSEGMKRVLKTFGPVPEFSGDTVEKVNQDMCMKVPDDPEHLAARRHWRDDCLMQLSKLKHQMQPQ</sequence>
<protein>
    <recommendedName>
        <fullName>Lambda-crystallin homolog</fullName>
        <ecNumber evidence="3">1.1.1.45</ecNumber>
    </recommendedName>
    <alternativeName>
        <fullName>L-gulonate 3-dehydrogenase</fullName>
        <shortName>Gul3DH</shortName>
    </alternativeName>
</protein>
<proteinExistence type="evidence at protein level"/>
<reference key="1">
    <citation type="journal article" date="2003" name="Gene">
        <title>Human CRYL1, a novel enzyme-crystallin overexpressed in liver and kidney and downregulated in 58% of liver cancer tissues from 60 Chinese patients, and four new homologs from other mammalians.</title>
        <authorList>
            <person name="Chen J."/>
            <person name="Yu L."/>
            <person name="Li D."/>
            <person name="Gao Q."/>
            <person name="Wang J."/>
            <person name="Huang X."/>
            <person name="Bi G."/>
            <person name="Wu H."/>
            <person name="Zhao S."/>
        </authorList>
    </citation>
    <scope>NUCLEOTIDE SEQUENCE [MRNA]</scope>
</reference>
<reference key="2">
    <citation type="journal article" date="2004" name="Genome Res.">
        <title>The status, quality, and expansion of the NIH full-length cDNA project: the Mammalian Gene Collection (MGC).</title>
        <authorList>
            <consortium name="The MGC Project Team"/>
        </authorList>
    </citation>
    <scope>NUCLEOTIDE SEQUENCE [LARGE SCALE MRNA]</scope>
    <source>
        <tissue>Kidney</tissue>
    </source>
</reference>
<reference key="3">
    <citation type="journal article" date="2012" name="Nat. Commun.">
        <title>Quantitative maps of protein phosphorylation sites across 14 different rat organs and tissues.</title>
        <authorList>
            <person name="Lundby A."/>
            <person name="Secher A."/>
            <person name="Lage K."/>
            <person name="Nordsborg N.B."/>
            <person name="Dmytriyev A."/>
            <person name="Lundby C."/>
            <person name="Olsen J.V."/>
        </authorList>
    </citation>
    <scope>PHOSPHORYLATION [LARGE SCALE ANALYSIS] AT SER-3</scope>
    <scope>IDENTIFICATION BY MASS SPECTROMETRY [LARGE SCALE ANALYSIS]</scope>
</reference>
<comment type="function">
    <text evidence="3">Has high L-gulonate 3-dehydrogenase activity. It also exhibits low dehydrogenase activity toward L-3-hydroxybutyrate (HBA) and L-threonate.</text>
</comment>
<comment type="catalytic activity">
    <reaction evidence="3">
        <text>L-gulonate + NAD(+) = 3-dehydro-L-gulonate + NADH + H(+)</text>
        <dbReference type="Rhea" id="RHEA:12889"/>
        <dbReference type="ChEBI" id="CHEBI:13115"/>
        <dbReference type="ChEBI" id="CHEBI:15378"/>
        <dbReference type="ChEBI" id="CHEBI:57540"/>
        <dbReference type="ChEBI" id="CHEBI:57655"/>
        <dbReference type="ChEBI" id="CHEBI:57945"/>
        <dbReference type="EC" id="1.1.1.45"/>
    </reaction>
    <physiologicalReaction direction="left-to-right" evidence="3">
        <dbReference type="Rhea" id="RHEA:12890"/>
    </physiologicalReaction>
</comment>
<comment type="activity regulation">
    <text evidence="3">Inhibited by malonate.</text>
</comment>
<comment type="subunit">
    <text evidence="3">Homodimer.</text>
</comment>
<comment type="subcellular location">
    <subcellularLocation>
        <location evidence="2">Cytoplasm</location>
    </subcellularLocation>
</comment>
<comment type="similarity">
    <text evidence="4">Belongs to the 3-hydroxyacyl-CoA dehydrogenase family.</text>
</comment>
<accession>Q811X6</accession>